<organism>
    <name type="scientific">Sinorhizobium medicae (strain WSM419)</name>
    <name type="common">Ensifer medicae</name>
    <dbReference type="NCBI Taxonomy" id="366394"/>
    <lineage>
        <taxon>Bacteria</taxon>
        <taxon>Pseudomonadati</taxon>
        <taxon>Pseudomonadota</taxon>
        <taxon>Alphaproteobacteria</taxon>
        <taxon>Hyphomicrobiales</taxon>
        <taxon>Rhizobiaceae</taxon>
        <taxon>Sinorhizobium/Ensifer group</taxon>
        <taxon>Sinorhizobium</taxon>
    </lineage>
</organism>
<keyword id="KW-0963">Cytoplasm</keyword>
<keyword id="KW-0342">GTP-binding</keyword>
<keyword id="KW-0378">Hydrolase</keyword>
<keyword id="KW-0460">Magnesium</keyword>
<keyword id="KW-0479">Metal-binding</keyword>
<keyword id="KW-0547">Nucleotide-binding</keyword>
<protein>
    <recommendedName>
        <fullName evidence="1">GTPase Obg</fullName>
        <ecNumber evidence="1">3.6.5.-</ecNumber>
    </recommendedName>
    <alternativeName>
        <fullName evidence="1">GTP-binding protein Obg</fullName>
    </alternativeName>
</protein>
<evidence type="ECO:0000255" key="1">
    <source>
        <dbReference type="HAMAP-Rule" id="MF_01454"/>
    </source>
</evidence>
<evidence type="ECO:0000255" key="2">
    <source>
        <dbReference type="PROSITE-ProRule" id="PRU01231"/>
    </source>
</evidence>
<proteinExistence type="inferred from homology"/>
<sequence>MKFLDETKVYIRSGDGGAGAVSFRREKFIEFGGPDGGDGGRGGDVWVEAVNGLNTLIDFRYQQHFKAKTGTHGMGRNRTGAKGADVTLKVPVGTQIFEEDSETLIVDMVAEGQRYRLAAGGNGGFGNAHFKSSTNQAPNWANPGLEGEEKTIWLRLKLIADAGLVGLPNAGKSTFLAACTRARPKIANYPFTTLHPNLGVATVDEKEFIIADIPGLIEGAHEGVGIGDRFLGHVERTRVLLHLVSAQEEDVAKAYKTVKHELEAYGGGLEEKPQIVALSQIDVLDEAELKAKSKALGKACGTPPLLISAVTNKGMTETLRALRSVIDAAKAGEEDA</sequence>
<dbReference type="EC" id="3.6.5.-" evidence="1"/>
<dbReference type="EMBL" id="CP000738">
    <property type="protein sequence ID" value="ABR61836.1"/>
    <property type="molecule type" value="Genomic_DNA"/>
</dbReference>
<dbReference type="RefSeq" id="YP_001328671.1">
    <property type="nucleotide sequence ID" value="NC_009636.1"/>
</dbReference>
<dbReference type="SMR" id="A6UDV6"/>
<dbReference type="STRING" id="366394.Smed_3009"/>
<dbReference type="KEGG" id="smd:Smed_3009"/>
<dbReference type="PATRIC" id="fig|366394.8.peg.6234"/>
<dbReference type="eggNOG" id="COG0536">
    <property type="taxonomic scope" value="Bacteria"/>
</dbReference>
<dbReference type="HOGENOM" id="CLU_011747_2_0_5"/>
<dbReference type="OrthoDB" id="9807318at2"/>
<dbReference type="Proteomes" id="UP000001108">
    <property type="component" value="Chromosome"/>
</dbReference>
<dbReference type="GO" id="GO:0005737">
    <property type="term" value="C:cytoplasm"/>
    <property type="evidence" value="ECO:0007669"/>
    <property type="project" value="UniProtKB-SubCell"/>
</dbReference>
<dbReference type="GO" id="GO:0005525">
    <property type="term" value="F:GTP binding"/>
    <property type="evidence" value="ECO:0007669"/>
    <property type="project" value="UniProtKB-UniRule"/>
</dbReference>
<dbReference type="GO" id="GO:0003924">
    <property type="term" value="F:GTPase activity"/>
    <property type="evidence" value="ECO:0007669"/>
    <property type="project" value="UniProtKB-UniRule"/>
</dbReference>
<dbReference type="GO" id="GO:0000287">
    <property type="term" value="F:magnesium ion binding"/>
    <property type="evidence" value="ECO:0007669"/>
    <property type="project" value="InterPro"/>
</dbReference>
<dbReference type="GO" id="GO:0042254">
    <property type="term" value="P:ribosome biogenesis"/>
    <property type="evidence" value="ECO:0007669"/>
    <property type="project" value="UniProtKB-UniRule"/>
</dbReference>
<dbReference type="CDD" id="cd01898">
    <property type="entry name" value="Obg"/>
    <property type="match status" value="1"/>
</dbReference>
<dbReference type="FunFam" id="2.70.210.12:FF:000001">
    <property type="entry name" value="GTPase Obg"/>
    <property type="match status" value="1"/>
</dbReference>
<dbReference type="Gene3D" id="2.70.210.12">
    <property type="entry name" value="GTP1/OBG domain"/>
    <property type="match status" value="1"/>
</dbReference>
<dbReference type="Gene3D" id="3.40.50.300">
    <property type="entry name" value="P-loop containing nucleotide triphosphate hydrolases"/>
    <property type="match status" value="1"/>
</dbReference>
<dbReference type="HAMAP" id="MF_01454">
    <property type="entry name" value="GTPase_Obg"/>
    <property type="match status" value="1"/>
</dbReference>
<dbReference type="InterPro" id="IPR031167">
    <property type="entry name" value="G_OBG"/>
</dbReference>
<dbReference type="InterPro" id="IPR006073">
    <property type="entry name" value="GTP-bd"/>
</dbReference>
<dbReference type="InterPro" id="IPR014100">
    <property type="entry name" value="GTP-bd_Obg/CgtA"/>
</dbReference>
<dbReference type="InterPro" id="IPR006074">
    <property type="entry name" value="GTP1-OBG_CS"/>
</dbReference>
<dbReference type="InterPro" id="IPR006169">
    <property type="entry name" value="GTP1_OBG_dom"/>
</dbReference>
<dbReference type="InterPro" id="IPR036726">
    <property type="entry name" value="GTP1_OBG_dom_sf"/>
</dbReference>
<dbReference type="InterPro" id="IPR045086">
    <property type="entry name" value="OBG_GTPase"/>
</dbReference>
<dbReference type="InterPro" id="IPR027417">
    <property type="entry name" value="P-loop_NTPase"/>
</dbReference>
<dbReference type="NCBIfam" id="TIGR02729">
    <property type="entry name" value="Obg_CgtA"/>
    <property type="match status" value="1"/>
</dbReference>
<dbReference type="NCBIfam" id="NF008955">
    <property type="entry name" value="PRK12297.1"/>
    <property type="match status" value="1"/>
</dbReference>
<dbReference type="NCBIfam" id="NF008956">
    <property type="entry name" value="PRK12299.1"/>
    <property type="match status" value="1"/>
</dbReference>
<dbReference type="PANTHER" id="PTHR11702">
    <property type="entry name" value="DEVELOPMENTALLY REGULATED GTP-BINDING PROTEIN-RELATED"/>
    <property type="match status" value="1"/>
</dbReference>
<dbReference type="PANTHER" id="PTHR11702:SF31">
    <property type="entry name" value="MITOCHONDRIAL RIBOSOME-ASSOCIATED GTPASE 2"/>
    <property type="match status" value="1"/>
</dbReference>
<dbReference type="Pfam" id="PF01018">
    <property type="entry name" value="GTP1_OBG"/>
    <property type="match status" value="1"/>
</dbReference>
<dbReference type="Pfam" id="PF01926">
    <property type="entry name" value="MMR_HSR1"/>
    <property type="match status" value="1"/>
</dbReference>
<dbReference type="PIRSF" id="PIRSF002401">
    <property type="entry name" value="GTP_bd_Obg/CgtA"/>
    <property type="match status" value="1"/>
</dbReference>
<dbReference type="PRINTS" id="PR00326">
    <property type="entry name" value="GTP1OBG"/>
</dbReference>
<dbReference type="SUPFAM" id="SSF82051">
    <property type="entry name" value="Obg GTP-binding protein N-terminal domain"/>
    <property type="match status" value="1"/>
</dbReference>
<dbReference type="SUPFAM" id="SSF52540">
    <property type="entry name" value="P-loop containing nucleoside triphosphate hydrolases"/>
    <property type="match status" value="1"/>
</dbReference>
<dbReference type="PROSITE" id="PS51710">
    <property type="entry name" value="G_OBG"/>
    <property type="match status" value="1"/>
</dbReference>
<dbReference type="PROSITE" id="PS00905">
    <property type="entry name" value="GTP1_OBG"/>
    <property type="match status" value="1"/>
</dbReference>
<dbReference type="PROSITE" id="PS51883">
    <property type="entry name" value="OBG"/>
    <property type="match status" value="1"/>
</dbReference>
<comment type="function">
    <text evidence="1">An essential GTPase which binds GTP, GDP and possibly (p)ppGpp with moderate affinity, with high nucleotide exchange rates and a fairly low GTP hydrolysis rate. Plays a role in control of the cell cycle, stress response, ribosome biogenesis and in those bacteria that undergo differentiation, in morphogenesis control.</text>
</comment>
<comment type="cofactor">
    <cofactor evidence="1">
        <name>Mg(2+)</name>
        <dbReference type="ChEBI" id="CHEBI:18420"/>
    </cofactor>
</comment>
<comment type="subunit">
    <text evidence="1">Monomer.</text>
</comment>
<comment type="subcellular location">
    <subcellularLocation>
        <location evidence="1">Cytoplasm</location>
    </subcellularLocation>
</comment>
<comment type="similarity">
    <text evidence="1">Belongs to the TRAFAC class OBG-HflX-like GTPase superfamily. OBG GTPase family.</text>
</comment>
<name>OBG_SINMW</name>
<accession>A6UDV6</accession>
<reference key="1">
    <citation type="submission" date="2007-06" db="EMBL/GenBank/DDBJ databases">
        <title>Complete sequence of Sinorhizobium medicae WSM419 chromosome.</title>
        <authorList>
            <consortium name="US DOE Joint Genome Institute"/>
            <person name="Copeland A."/>
            <person name="Lucas S."/>
            <person name="Lapidus A."/>
            <person name="Barry K."/>
            <person name="Glavina del Rio T."/>
            <person name="Dalin E."/>
            <person name="Tice H."/>
            <person name="Pitluck S."/>
            <person name="Chain P."/>
            <person name="Malfatti S."/>
            <person name="Shin M."/>
            <person name="Vergez L."/>
            <person name="Schmutz J."/>
            <person name="Larimer F."/>
            <person name="Land M."/>
            <person name="Hauser L."/>
            <person name="Kyrpides N."/>
            <person name="Mikhailova N."/>
            <person name="Reeve W.G."/>
            <person name="Richardson P."/>
        </authorList>
    </citation>
    <scope>NUCLEOTIDE SEQUENCE [LARGE SCALE GENOMIC DNA]</scope>
    <source>
        <strain>WSM419</strain>
    </source>
</reference>
<gene>
    <name evidence="1" type="primary">obg</name>
    <name type="ordered locus">Smed_3009</name>
</gene>
<feature type="chain" id="PRO_0000386262" description="GTPase Obg">
    <location>
        <begin position="1"/>
        <end position="336"/>
    </location>
</feature>
<feature type="domain" description="Obg" evidence="2">
    <location>
        <begin position="1"/>
        <end position="159"/>
    </location>
</feature>
<feature type="domain" description="OBG-type G" evidence="1">
    <location>
        <begin position="160"/>
        <end position="327"/>
    </location>
</feature>
<feature type="binding site" evidence="1">
    <location>
        <begin position="166"/>
        <end position="173"/>
    </location>
    <ligand>
        <name>GTP</name>
        <dbReference type="ChEBI" id="CHEBI:37565"/>
    </ligand>
</feature>
<feature type="binding site" evidence="1">
    <location>
        <position position="173"/>
    </location>
    <ligand>
        <name>Mg(2+)</name>
        <dbReference type="ChEBI" id="CHEBI:18420"/>
    </ligand>
</feature>
<feature type="binding site" evidence="1">
    <location>
        <begin position="191"/>
        <end position="195"/>
    </location>
    <ligand>
        <name>GTP</name>
        <dbReference type="ChEBI" id="CHEBI:37565"/>
    </ligand>
</feature>
<feature type="binding site" evidence="1">
    <location>
        <position position="193"/>
    </location>
    <ligand>
        <name>Mg(2+)</name>
        <dbReference type="ChEBI" id="CHEBI:18420"/>
    </ligand>
</feature>
<feature type="binding site" evidence="1">
    <location>
        <begin position="212"/>
        <end position="215"/>
    </location>
    <ligand>
        <name>GTP</name>
        <dbReference type="ChEBI" id="CHEBI:37565"/>
    </ligand>
</feature>
<feature type="binding site" evidence="1">
    <location>
        <begin position="279"/>
        <end position="282"/>
    </location>
    <ligand>
        <name>GTP</name>
        <dbReference type="ChEBI" id="CHEBI:37565"/>
    </ligand>
</feature>
<feature type="binding site" evidence="1">
    <location>
        <begin position="308"/>
        <end position="310"/>
    </location>
    <ligand>
        <name>GTP</name>
        <dbReference type="ChEBI" id="CHEBI:37565"/>
    </ligand>
</feature>